<comment type="function">
    <text evidence="4">Copper amine oxidase that can use putrescine and spermidine as substrates (PubMed:23915037). Involved in putrescine catabolism in peroxisomes (PubMed:23915037).</text>
</comment>
<comment type="catalytic activity">
    <reaction evidence="4">
        <text>a primary methyl amine + O2 + H2O = an aldehyde + H2O2 + NH4(+)</text>
        <dbReference type="Rhea" id="RHEA:16153"/>
        <dbReference type="ChEBI" id="CHEBI:15377"/>
        <dbReference type="ChEBI" id="CHEBI:15379"/>
        <dbReference type="ChEBI" id="CHEBI:16240"/>
        <dbReference type="ChEBI" id="CHEBI:17478"/>
        <dbReference type="ChEBI" id="CHEBI:28938"/>
        <dbReference type="ChEBI" id="CHEBI:228804"/>
        <dbReference type="EC" id="1.4.3.21"/>
    </reaction>
    <physiologicalReaction direction="left-to-right" evidence="4">
        <dbReference type="Rhea" id="RHEA:16154"/>
    </physiologicalReaction>
</comment>
<comment type="pathway">
    <text evidence="4">Amine and polyamine degradation; putrescine degradation.</text>
</comment>
<comment type="subcellular location">
    <subcellularLocation>
        <location evidence="4">Peroxisome</location>
    </subcellularLocation>
</comment>
<comment type="alternative products">
    <event type="alternative splicing"/>
    <isoform>
        <id>F4IAX1-1</id>
        <name>1</name>
        <sequence type="displayed"/>
    </isoform>
    <isoform>
        <id>F4IAX1-2</id>
        <name>2</name>
        <sequence type="described" ref="VSP_061527"/>
    </isoform>
</comment>
<comment type="tissue specificity">
    <text evidence="4 5">Mostly expressed in stems, and, at lower levels, in flowers and leaves (PubMed:23915037). Mainly detectable in stipules, hypocotyls and roots (PubMed:31862580).</text>
</comment>
<comment type="developmental stage">
    <text evidence="5">In young seedlings, expressed in hypocotyls, hypocotyl/root junctions and roots, especially in vascular tissue (e.g. xylem and metaxylem) (PubMed:31862580). Observed in shoot apex, associated with stipules (PubMed:31862580).</text>
</comment>
<comment type="induction">
    <text evidence="4 5">Induced transiently by auxin (IAA) (PubMed:31862580). Induced by jasmonic acid (MeJA) (PubMed:23915037, PubMed:31862580). Accumulates during dehydration recovery and treatment with putrescine (Put) (PubMed:31862580). Repressed by abscisic acid (ABA) and salicylic acid (SA) (PubMed:31862580). Triggered by wounding (PubMed:23915037, PubMed:31862580).</text>
</comment>
<comment type="PTM">
    <text evidence="2">Topaquinone (TPQ) is generated by copper-dependent autoxidation of a specific tyrosyl residue.</text>
</comment>
<comment type="similarity">
    <text evidence="8">Belongs to the copper/topaquinone oxidase family.</text>
</comment>
<comment type="sequence caution" evidence="8">
    <conflict type="erroneous gene model prediction">
        <sequence resource="EMBL-CDS" id="AAG60142"/>
    </conflict>
</comment>
<comment type="sequence caution" evidence="8">
    <conflict type="erroneous initiation">
        <sequence resource="EMBL-CDS" id="BAC41866"/>
    </conflict>
    <text>Truncated N-terminus.</text>
</comment>
<accession>F4IAX1</accession>
<accession>Q8GZ62</accession>
<accession>Q9C6W0</accession>
<accession>Q9C6W1</accession>
<sequence>MAPLHFTILILFSFVIVVSSSSFTPPRHPFDPLTETELKLVRTIINKSYPVGPNHKFTFQYVGLNEPNKSLVLSWYSSPNHTIKPPPRQAFVIARDNGKTREIVLDFSSRAIVSDKIHVGNGYPMLSNDEQEASTELVVKFKPFIDSVAKRGLNVSEIVFTTSTIGWYGETKAEAERVIRLMPFYLDGTVNMYLRPIEGMTIIVNLDEMKVSEFKDRSVVTMPIANGTEYRISKLNPPFGPTLHNAVLLQPDGPGFKVDGHIVRWANWEFHISFDVRAGIVISLASLFDTDVNKYRQVLYKGHLSEMFIPYMDPSDDWYFITYLDCGDFGCGQCAVSLQPYTDCPAGAVFMDGIFAGQDGTPAKIPKVMCIFEKYAGDIMWRHTEAEIPNLEITEVRPDVSLVARIVTTVGNYDYIVDYEFKPSGSIKMGVGLTGVLEVKPVEYIHTSEIKLGEDIHGTIVADNTVGVNHDHFVTFRLHLDIDGTENSFVRNELVTTRSPKSVNTPRKTYWTTKPKTAKTEAEARVKLGLKAEELVVVNPNRKTKHGNEVGYRLLHGSAAGPLLAQDDFPQIRAAFTNYNVWITPYNRSEVWAGGLYADRSQGDDTLAVWSQRNRKIEKEDIVMWYTVGFHHVPSQEDYPTMPTLSGGFELRPTNFFERNPVLKTKPVKVTTARKCTPKND</sequence>
<organism>
    <name type="scientific">Arabidopsis thaliana</name>
    <name type="common">Mouse-ear cress</name>
    <dbReference type="NCBI Taxonomy" id="3702"/>
    <lineage>
        <taxon>Eukaryota</taxon>
        <taxon>Viridiplantae</taxon>
        <taxon>Streptophyta</taxon>
        <taxon>Embryophyta</taxon>
        <taxon>Tracheophyta</taxon>
        <taxon>Spermatophyta</taxon>
        <taxon>Magnoliopsida</taxon>
        <taxon>eudicotyledons</taxon>
        <taxon>Gunneridae</taxon>
        <taxon>Pentapetalae</taxon>
        <taxon>rosids</taxon>
        <taxon>malvids</taxon>
        <taxon>Brassicales</taxon>
        <taxon>Brassicaceae</taxon>
        <taxon>Camelineae</taxon>
        <taxon>Arabidopsis</taxon>
    </lineage>
</organism>
<reference key="1">
    <citation type="journal article" date="2000" name="Nature">
        <title>Sequence and analysis of chromosome 1 of the plant Arabidopsis thaliana.</title>
        <authorList>
            <person name="Theologis A."/>
            <person name="Ecker J.R."/>
            <person name="Palm C.J."/>
            <person name="Federspiel N.A."/>
            <person name="Kaul S."/>
            <person name="White O."/>
            <person name="Alonso J."/>
            <person name="Altafi H."/>
            <person name="Araujo R."/>
            <person name="Bowman C.L."/>
            <person name="Brooks S.Y."/>
            <person name="Buehler E."/>
            <person name="Chan A."/>
            <person name="Chao Q."/>
            <person name="Chen H."/>
            <person name="Cheuk R.F."/>
            <person name="Chin C.W."/>
            <person name="Chung M.K."/>
            <person name="Conn L."/>
            <person name="Conway A.B."/>
            <person name="Conway A.R."/>
            <person name="Creasy T.H."/>
            <person name="Dewar K."/>
            <person name="Dunn P."/>
            <person name="Etgu P."/>
            <person name="Feldblyum T.V."/>
            <person name="Feng J.-D."/>
            <person name="Fong B."/>
            <person name="Fujii C.Y."/>
            <person name="Gill J.E."/>
            <person name="Goldsmith A.D."/>
            <person name="Haas B."/>
            <person name="Hansen N.F."/>
            <person name="Hughes B."/>
            <person name="Huizar L."/>
            <person name="Hunter J.L."/>
            <person name="Jenkins J."/>
            <person name="Johnson-Hopson C."/>
            <person name="Khan S."/>
            <person name="Khaykin E."/>
            <person name="Kim C.J."/>
            <person name="Koo H.L."/>
            <person name="Kremenetskaia I."/>
            <person name="Kurtz D.B."/>
            <person name="Kwan A."/>
            <person name="Lam B."/>
            <person name="Langin-Hooper S."/>
            <person name="Lee A."/>
            <person name="Lee J.M."/>
            <person name="Lenz C.A."/>
            <person name="Li J.H."/>
            <person name="Li Y.-P."/>
            <person name="Lin X."/>
            <person name="Liu S.X."/>
            <person name="Liu Z.A."/>
            <person name="Luros J.S."/>
            <person name="Maiti R."/>
            <person name="Marziali A."/>
            <person name="Militscher J."/>
            <person name="Miranda M."/>
            <person name="Nguyen M."/>
            <person name="Nierman W.C."/>
            <person name="Osborne B.I."/>
            <person name="Pai G."/>
            <person name="Peterson J."/>
            <person name="Pham P.K."/>
            <person name="Rizzo M."/>
            <person name="Rooney T."/>
            <person name="Rowley D."/>
            <person name="Sakano H."/>
            <person name="Salzberg S.L."/>
            <person name="Schwartz J.R."/>
            <person name="Shinn P."/>
            <person name="Southwick A.M."/>
            <person name="Sun H."/>
            <person name="Tallon L.J."/>
            <person name="Tambunga G."/>
            <person name="Toriumi M.J."/>
            <person name="Town C.D."/>
            <person name="Utterback T."/>
            <person name="Van Aken S."/>
            <person name="Vaysberg M."/>
            <person name="Vysotskaia V.S."/>
            <person name="Walker M."/>
            <person name="Wu D."/>
            <person name="Yu G."/>
            <person name="Fraser C.M."/>
            <person name="Venter J.C."/>
            <person name="Davis R.W."/>
        </authorList>
    </citation>
    <scope>NUCLEOTIDE SEQUENCE [LARGE SCALE GENOMIC DNA]</scope>
    <source>
        <strain>cv. Columbia</strain>
    </source>
</reference>
<reference key="2">
    <citation type="journal article" date="2017" name="Plant J.">
        <title>Araport11: a complete reannotation of the Arabidopsis thaliana reference genome.</title>
        <authorList>
            <person name="Cheng C.Y."/>
            <person name="Krishnakumar V."/>
            <person name="Chan A.P."/>
            <person name="Thibaud-Nissen F."/>
            <person name="Schobel S."/>
            <person name="Town C.D."/>
        </authorList>
    </citation>
    <scope>GENOME REANNOTATION</scope>
    <source>
        <strain>cv. Columbia</strain>
    </source>
</reference>
<reference key="3">
    <citation type="submission" date="2004-02" db="EMBL/GenBank/DDBJ databases">
        <title>Arabidopsis cDNA clones.</title>
        <authorList>
            <person name="Shinn P."/>
            <person name="Chen H."/>
            <person name="Cheuk R.F."/>
            <person name="Kim C.J."/>
            <person name="Ecker J.R."/>
        </authorList>
    </citation>
    <scope>NUCLEOTIDE SEQUENCE [LARGE SCALE MRNA] (ISOFORM 2)</scope>
    <source>
        <strain>cv. Columbia</strain>
    </source>
</reference>
<reference key="4">
    <citation type="journal article" date="2002" name="Science">
        <title>Functional annotation of a full-length Arabidopsis cDNA collection.</title>
        <authorList>
            <person name="Seki M."/>
            <person name="Narusaka M."/>
            <person name="Kamiya A."/>
            <person name="Ishida J."/>
            <person name="Satou M."/>
            <person name="Sakurai T."/>
            <person name="Nakajima M."/>
            <person name="Enju A."/>
            <person name="Akiyama K."/>
            <person name="Oono Y."/>
            <person name="Muramatsu M."/>
            <person name="Hayashizaki Y."/>
            <person name="Kawai J."/>
            <person name="Carninci P."/>
            <person name="Itoh M."/>
            <person name="Ishii Y."/>
            <person name="Arakawa T."/>
            <person name="Shibata K."/>
            <person name="Shinagawa A."/>
            <person name="Shinozaki K."/>
        </authorList>
    </citation>
    <scope>NUCLEOTIDE SEQUENCE [LARGE SCALE MRNA] OF 97-681</scope>
    <source>
        <strain>cv. Columbia</strain>
    </source>
</reference>
<reference key="5">
    <citation type="journal article" date="2013" name="BMC Plant Biol.">
        <title>Copper-containing amine oxidases contribute to terminal polyamine oxidation in peroxisomes and apoplast of Arabidopsis thaliana.</title>
        <authorList>
            <person name="Planas-Portell J."/>
            <person name="Gallart M."/>
            <person name="Tiburcio A.F."/>
            <person name="Altabella T."/>
        </authorList>
    </citation>
    <scope>FUNCTION</scope>
    <scope>CATALYTIC ACTIVITY</scope>
    <scope>PATHWAY</scope>
    <scope>SUBCELLULAR LOCATION</scope>
    <scope>TISSUE SPECIFICITY</scope>
    <scope>INDUCTION BY WOUNDING AND JASMONATE</scope>
    <scope>GENE FAMILY</scope>
    <scope>NOMENCLATURE</scope>
    <source>
        <strain>cv. Columbia</strain>
    </source>
</reference>
<reference key="6">
    <citation type="journal article" date="2020" name="Plant Physiol. Biochem.">
        <title>Developmental, hormone- and stress-modulated expression profiles of four members of the Arabidopsis copper-amine oxidase gene family.</title>
        <authorList>
            <person name="Fraudentali I."/>
            <person name="Ghuge S.A."/>
            <person name="Carucci A."/>
            <person name="Tavladoraki P."/>
            <person name="Angelini R."/>
            <person name="Rodrigues-Pousada R.A."/>
            <person name="Cona A."/>
        </authorList>
    </citation>
    <scope>TISSUE SPECIFICITY</scope>
    <scope>DEVELOPMENTAL STAGE</scope>
    <scope>INDUCTION BY JASMONATE; ABSCISIC ACID; SALICYLIC ACID; DEHYDRATION RECOVERY; WOUNDING; PUTRESCINE AND AUXIN</scope>
    <scope>GENE FAMILY</scope>
    <scope>NOMENCLATURE</scope>
    <source>
        <strain>cv. Columbia</strain>
    </source>
</reference>
<protein>
    <recommendedName>
        <fullName evidence="7">Amine oxidase [copper-containing] alpha 3, peroxisomal</fullName>
        <shortName evidence="6">AtCuAO2</shortName>
        <shortName evidence="7">AtCuAOalpha3</shortName>
        <shortName evidence="6">Copper amine oxidase 2</shortName>
        <ecNumber evidence="4">1.4.3.21</ecNumber>
    </recommendedName>
</protein>
<keyword id="KW-0025">Alternative splicing</keyword>
<keyword id="KW-0186">Copper</keyword>
<keyword id="KW-1015">Disulfide bond</keyword>
<keyword id="KW-0464">Manganese</keyword>
<keyword id="KW-0479">Metal-binding</keyword>
<keyword id="KW-0560">Oxidoreductase</keyword>
<keyword id="KW-0576">Peroxisome</keyword>
<keyword id="KW-1185">Reference proteome</keyword>
<keyword id="KW-0801">TPQ</keyword>
<dbReference type="EC" id="1.4.3.21" evidence="4"/>
<dbReference type="EMBL" id="AC074360">
    <property type="protein sequence ID" value="AAG60142.1"/>
    <property type="status" value="ALT_SEQ"/>
    <property type="molecule type" value="Genomic_DNA"/>
</dbReference>
<dbReference type="EMBL" id="AC074360">
    <property type="protein sequence ID" value="AAG60145.1"/>
    <property type="molecule type" value="Genomic_DNA"/>
</dbReference>
<dbReference type="EMBL" id="CP002684">
    <property type="protein sequence ID" value="AEE31384.1"/>
    <property type="molecule type" value="Genomic_DNA"/>
</dbReference>
<dbReference type="EMBL" id="BT011581">
    <property type="protein sequence ID" value="AAS46634.1"/>
    <property type="molecule type" value="mRNA"/>
</dbReference>
<dbReference type="EMBL" id="BT012254">
    <property type="protein sequence ID" value="AAS76741.1"/>
    <property type="molecule type" value="mRNA"/>
</dbReference>
<dbReference type="EMBL" id="AK117190">
    <property type="protein sequence ID" value="BAC41866.1"/>
    <property type="status" value="ALT_INIT"/>
    <property type="molecule type" value="mRNA"/>
</dbReference>
<dbReference type="RefSeq" id="NP_174452.2">
    <molecule id="F4IAX1-1"/>
    <property type="nucleotide sequence ID" value="NM_102906.4"/>
</dbReference>
<dbReference type="SMR" id="F4IAX1"/>
<dbReference type="FunCoup" id="F4IAX1">
    <property type="interactions" value="112"/>
</dbReference>
<dbReference type="STRING" id="3702.F4IAX1"/>
<dbReference type="iPTMnet" id="F4IAX1"/>
<dbReference type="PaxDb" id="3702-AT1G31710.1"/>
<dbReference type="ProteomicsDB" id="197361"/>
<dbReference type="EnsemblPlants" id="AT1G31710.1">
    <molecule id="F4IAX1-1"/>
    <property type="protein sequence ID" value="AT1G31710.1"/>
    <property type="gene ID" value="AT1G31710"/>
</dbReference>
<dbReference type="GeneID" id="840058"/>
<dbReference type="Gramene" id="AT1G31710.1">
    <molecule id="F4IAX1-1"/>
    <property type="protein sequence ID" value="AT1G31710.1"/>
    <property type="gene ID" value="AT1G31710"/>
</dbReference>
<dbReference type="KEGG" id="ath:AT1G31710"/>
<dbReference type="Araport" id="AT1G31710"/>
<dbReference type="TAIR" id="AT1G31710">
    <property type="gene designation" value="CUAOALPHA3"/>
</dbReference>
<dbReference type="eggNOG" id="KOG1186">
    <property type="taxonomic scope" value="Eukaryota"/>
</dbReference>
<dbReference type="HOGENOM" id="CLU_011500_5_4_1"/>
<dbReference type="InParanoid" id="F4IAX1"/>
<dbReference type="OMA" id="LYAGGWY"/>
<dbReference type="BioCyc" id="ARA:AT1G31710-MONOMER"/>
<dbReference type="BRENDA" id="1.4.3.21">
    <property type="organism ID" value="399"/>
</dbReference>
<dbReference type="UniPathway" id="UPA00188"/>
<dbReference type="PRO" id="PR:F4IAX1"/>
<dbReference type="Proteomes" id="UP000006548">
    <property type="component" value="Chromosome 1"/>
</dbReference>
<dbReference type="ExpressionAtlas" id="F4IAX1">
    <property type="expression patterns" value="baseline and differential"/>
</dbReference>
<dbReference type="GO" id="GO:0005777">
    <property type="term" value="C:peroxisome"/>
    <property type="evidence" value="ECO:0000314"/>
    <property type="project" value="UniProtKB"/>
</dbReference>
<dbReference type="GO" id="GO:0052595">
    <property type="term" value="F:aliphatic amine oxidase activity"/>
    <property type="evidence" value="ECO:0000314"/>
    <property type="project" value="UniProtKB"/>
</dbReference>
<dbReference type="GO" id="GO:0005507">
    <property type="term" value="F:copper ion binding"/>
    <property type="evidence" value="ECO:0007669"/>
    <property type="project" value="InterPro"/>
</dbReference>
<dbReference type="GO" id="GO:0008131">
    <property type="term" value="F:primary methylamine oxidase activity"/>
    <property type="evidence" value="ECO:0007669"/>
    <property type="project" value="UniProtKB-EC"/>
</dbReference>
<dbReference type="GO" id="GO:0048038">
    <property type="term" value="F:quinone binding"/>
    <property type="evidence" value="ECO:0007669"/>
    <property type="project" value="InterPro"/>
</dbReference>
<dbReference type="GO" id="GO:0009447">
    <property type="term" value="P:putrescine catabolic process"/>
    <property type="evidence" value="ECO:0007669"/>
    <property type="project" value="UniProtKB-UniPathway"/>
</dbReference>
<dbReference type="GO" id="GO:0009737">
    <property type="term" value="P:response to abscisic acid"/>
    <property type="evidence" value="ECO:0000270"/>
    <property type="project" value="UniProtKB"/>
</dbReference>
<dbReference type="GO" id="GO:0009733">
    <property type="term" value="P:response to auxin"/>
    <property type="evidence" value="ECO:0000270"/>
    <property type="project" value="UniProtKB"/>
</dbReference>
<dbReference type="GO" id="GO:0009753">
    <property type="term" value="P:response to jasmonic acid"/>
    <property type="evidence" value="ECO:0000270"/>
    <property type="project" value="UniProtKB"/>
</dbReference>
<dbReference type="GO" id="GO:1904585">
    <property type="term" value="P:response to putrescine"/>
    <property type="evidence" value="ECO:0000270"/>
    <property type="project" value="UniProtKB"/>
</dbReference>
<dbReference type="GO" id="GO:0009751">
    <property type="term" value="P:response to salicylic acid"/>
    <property type="evidence" value="ECO:0000270"/>
    <property type="project" value="UniProtKB"/>
</dbReference>
<dbReference type="GO" id="GO:0009414">
    <property type="term" value="P:response to water deprivation"/>
    <property type="evidence" value="ECO:0000270"/>
    <property type="project" value="UniProtKB"/>
</dbReference>
<dbReference type="GO" id="GO:0009611">
    <property type="term" value="P:response to wounding"/>
    <property type="evidence" value="ECO:0000270"/>
    <property type="project" value="UniProtKB"/>
</dbReference>
<dbReference type="FunFam" id="2.70.98.20:FF:000004">
    <property type="entry name" value="Amine oxidase"/>
    <property type="match status" value="1"/>
</dbReference>
<dbReference type="FunFam" id="3.10.450.40:FF:000012">
    <property type="entry name" value="Amine oxidase"/>
    <property type="match status" value="1"/>
</dbReference>
<dbReference type="Gene3D" id="3.10.450.40">
    <property type="match status" value="2"/>
</dbReference>
<dbReference type="Gene3D" id="2.70.98.20">
    <property type="entry name" value="Copper amine oxidase, catalytic domain"/>
    <property type="match status" value="1"/>
</dbReference>
<dbReference type="InterPro" id="IPR049947">
    <property type="entry name" value="Cu_Am_Ox_Cu-bd"/>
</dbReference>
<dbReference type="InterPro" id="IPR000269">
    <property type="entry name" value="Cu_amine_oxidase"/>
</dbReference>
<dbReference type="InterPro" id="IPR015798">
    <property type="entry name" value="Cu_amine_oxidase_C"/>
</dbReference>
<dbReference type="InterPro" id="IPR036460">
    <property type="entry name" value="Cu_amine_oxidase_C_sf"/>
</dbReference>
<dbReference type="InterPro" id="IPR016182">
    <property type="entry name" value="Cu_amine_oxidase_N-reg"/>
</dbReference>
<dbReference type="InterPro" id="IPR015800">
    <property type="entry name" value="Cu_amine_oxidase_N2"/>
</dbReference>
<dbReference type="InterPro" id="IPR015802">
    <property type="entry name" value="Cu_amine_oxidase_N3"/>
</dbReference>
<dbReference type="PANTHER" id="PTHR10638:SF84">
    <property type="entry name" value="AMINE OXIDASE [COPPER-CONTAINING] ALPHA 3, PEROXISOMAL"/>
    <property type="match status" value="1"/>
</dbReference>
<dbReference type="PANTHER" id="PTHR10638">
    <property type="entry name" value="COPPER AMINE OXIDASE"/>
    <property type="match status" value="1"/>
</dbReference>
<dbReference type="Pfam" id="PF01179">
    <property type="entry name" value="Cu_amine_oxid"/>
    <property type="match status" value="1"/>
</dbReference>
<dbReference type="Pfam" id="PF02727">
    <property type="entry name" value="Cu_amine_oxidN2"/>
    <property type="match status" value="1"/>
</dbReference>
<dbReference type="Pfam" id="PF02728">
    <property type="entry name" value="Cu_amine_oxidN3"/>
    <property type="match status" value="1"/>
</dbReference>
<dbReference type="SUPFAM" id="SSF49998">
    <property type="entry name" value="Amine oxidase catalytic domain"/>
    <property type="match status" value="1"/>
</dbReference>
<dbReference type="SUPFAM" id="SSF54416">
    <property type="entry name" value="Amine oxidase N-terminal region"/>
    <property type="match status" value="2"/>
</dbReference>
<dbReference type="PROSITE" id="PS01165">
    <property type="entry name" value="COPPER_AMINE_OXID_2"/>
    <property type="match status" value="1"/>
</dbReference>
<name>CAOA3_ARATH</name>
<gene>
    <name evidence="7" type="primary">CuAOalpha3</name>
    <name evidence="6" type="synonym">CuAO2</name>
    <name evidence="9" type="ordered locus">At1g31710</name>
    <name evidence="11" type="ORF">F27M3.10</name>
    <name evidence="10" type="ORF">F27M3.9</name>
</gene>
<proteinExistence type="evidence at protein level"/>
<feature type="chain" id="PRO_5003311420" description="Amine oxidase [copper-containing] alpha 3, peroxisomal">
    <location>
        <begin position="1"/>
        <end position="681"/>
    </location>
</feature>
<feature type="active site" description="Proton acceptor" evidence="1">
    <location>
        <position position="325"/>
    </location>
</feature>
<feature type="active site" description="Schiff-base intermediate with substrate; via topaquinone" evidence="1">
    <location>
        <position position="413"/>
    </location>
</feature>
<feature type="binding site" evidence="1">
    <location>
        <begin position="323"/>
        <end position="334"/>
    </location>
    <ligand>
        <name>substrate</name>
    </ligand>
</feature>
<feature type="binding site" evidence="2">
    <location>
        <begin position="410"/>
        <end position="415"/>
    </location>
    <ligand>
        <name>substrate</name>
    </ligand>
</feature>
<feature type="binding site" evidence="3">
    <location>
        <position position="470"/>
    </location>
    <ligand>
        <name>Cu cation</name>
        <dbReference type="ChEBI" id="CHEBI:23378"/>
    </ligand>
</feature>
<feature type="binding site" evidence="3">
    <location>
        <position position="472"/>
    </location>
    <ligand>
        <name>Cu cation</name>
        <dbReference type="ChEBI" id="CHEBI:23378"/>
    </ligand>
</feature>
<feature type="binding site" evidence="3">
    <location>
        <position position="481"/>
    </location>
    <ligand>
        <name>Mn(2+)</name>
        <dbReference type="ChEBI" id="CHEBI:29035"/>
    </ligand>
</feature>
<feature type="binding site" evidence="3">
    <location>
        <position position="621"/>
    </location>
    <ligand>
        <name>Mn(2+)</name>
        <dbReference type="ChEBI" id="CHEBI:29035"/>
    </ligand>
</feature>
<feature type="binding site" evidence="3">
    <location>
        <position position="622"/>
    </location>
    <ligand>
        <name>Mn(2+)</name>
        <dbReference type="ChEBI" id="CHEBI:29035"/>
    </ligand>
</feature>
<feature type="binding site" evidence="3">
    <location>
        <position position="632"/>
    </location>
    <ligand>
        <name>Cu cation</name>
        <dbReference type="ChEBI" id="CHEBI:23378"/>
    </ligand>
</feature>
<feature type="modified residue" description="2',4',5'-topaquinone" evidence="3">
    <location>
        <position position="413"/>
    </location>
</feature>
<feature type="disulfide bond" evidence="3">
    <location>
        <begin position="344"/>
        <end position="370"/>
    </location>
</feature>
<feature type="splice variant" id="VSP_061527" description="In isoform 2.">
    <location>
        <begin position="265"/>
        <end position="681"/>
    </location>
</feature>
<feature type="sequence conflict" description="In Ref. 4; BAC41866." evidence="8" ref="4">
    <original>V</original>
    <variation>A</variation>
    <location>
        <position position="407"/>
    </location>
</feature>
<feature type="sequence conflict" description="In Ref. 4; BAC41866." evidence="8" ref="4">
    <original>K</original>
    <variation>E</variation>
    <location>
        <position position="531"/>
    </location>
</feature>
<evidence type="ECO:0000250" key="1">
    <source>
        <dbReference type="UniProtKB" id="P12807"/>
    </source>
</evidence>
<evidence type="ECO:0000250" key="2">
    <source>
        <dbReference type="UniProtKB" id="P46883"/>
    </source>
</evidence>
<evidence type="ECO:0000250" key="3">
    <source>
        <dbReference type="UniProtKB" id="Q43077"/>
    </source>
</evidence>
<evidence type="ECO:0000269" key="4">
    <source>
    </source>
</evidence>
<evidence type="ECO:0000269" key="5">
    <source>
    </source>
</evidence>
<evidence type="ECO:0000303" key="6">
    <source>
    </source>
</evidence>
<evidence type="ECO:0000303" key="7">
    <source>
    </source>
</evidence>
<evidence type="ECO:0000305" key="8"/>
<evidence type="ECO:0000312" key="9">
    <source>
        <dbReference type="Araport" id="AT1G31710"/>
    </source>
</evidence>
<evidence type="ECO:0000312" key="10">
    <source>
        <dbReference type="EMBL" id="AAG60142.1"/>
    </source>
</evidence>
<evidence type="ECO:0000312" key="11">
    <source>
        <dbReference type="EMBL" id="AAG60145.1"/>
    </source>
</evidence>